<feature type="chain" id="PRO_0000109808" description="Protein HitA">
    <location>
        <begin position="1"/>
        <end position="107"/>
    </location>
</feature>
<feature type="domain" description="HIT" evidence="1">
    <location>
        <begin position="5"/>
        <end position="107"/>
    </location>
</feature>
<feature type="short sequence motif" description="Histidine triad motif">
    <location>
        <begin position="97"/>
        <end position="101"/>
    </location>
</feature>
<proteinExistence type="predicted"/>
<accession>O07817</accession>
<name>HITA_NEIGO</name>
<gene>
    <name type="primary">hitA</name>
</gene>
<sequence>MDNCIFCKIAAKEIPAQTVYEDGEMVCFKDINPAAPLHLLLIPKVHFDSLAHAAPEHQPLLGKMMLKVPEIAKASGLTDGFKTLINTGKGGGQEVFHLHIHIMGTPV</sequence>
<dbReference type="EMBL" id="AF003550">
    <property type="protein sequence ID" value="AAB61288.1"/>
    <property type="molecule type" value="Genomic_DNA"/>
</dbReference>
<dbReference type="RefSeq" id="WP_003687490.1">
    <property type="nucleotide sequence ID" value="NZ_WHPL01000002.1"/>
</dbReference>
<dbReference type="SMR" id="O07817"/>
<dbReference type="OMA" id="YRVVMNC"/>
<dbReference type="GO" id="GO:0003824">
    <property type="term" value="F:catalytic activity"/>
    <property type="evidence" value="ECO:0007669"/>
    <property type="project" value="InterPro"/>
</dbReference>
<dbReference type="CDD" id="cd01276">
    <property type="entry name" value="PKCI_related"/>
    <property type="match status" value="1"/>
</dbReference>
<dbReference type="Gene3D" id="3.30.428.10">
    <property type="entry name" value="HIT-like"/>
    <property type="match status" value="1"/>
</dbReference>
<dbReference type="InterPro" id="IPR019808">
    <property type="entry name" value="Histidine_triad_CS"/>
</dbReference>
<dbReference type="InterPro" id="IPR001310">
    <property type="entry name" value="Histidine_triad_HIT"/>
</dbReference>
<dbReference type="InterPro" id="IPR011146">
    <property type="entry name" value="HIT-like"/>
</dbReference>
<dbReference type="InterPro" id="IPR036265">
    <property type="entry name" value="HIT-like_sf"/>
</dbReference>
<dbReference type="PANTHER" id="PTHR23089">
    <property type="entry name" value="HISTIDINE TRIAD HIT PROTEIN"/>
    <property type="match status" value="1"/>
</dbReference>
<dbReference type="Pfam" id="PF11969">
    <property type="entry name" value="DcpS_C"/>
    <property type="match status" value="1"/>
</dbReference>
<dbReference type="PRINTS" id="PR00332">
    <property type="entry name" value="HISTRIAD"/>
</dbReference>
<dbReference type="SUPFAM" id="SSF54197">
    <property type="entry name" value="HIT-like"/>
    <property type="match status" value="1"/>
</dbReference>
<dbReference type="PROSITE" id="PS00892">
    <property type="entry name" value="HIT_1"/>
    <property type="match status" value="1"/>
</dbReference>
<dbReference type="PROSITE" id="PS51084">
    <property type="entry name" value="HIT_2"/>
    <property type="match status" value="1"/>
</dbReference>
<protein>
    <recommendedName>
        <fullName>Protein HitA</fullName>
    </recommendedName>
</protein>
<organism>
    <name type="scientific">Neisseria gonorrhoeae</name>
    <dbReference type="NCBI Taxonomy" id="485"/>
    <lineage>
        <taxon>Bacteria</taxon>
        <taxon>Pseudomonadati</taxon>
        <taxon>Pseudomonadota</taxon>
        <taxon>Betaproteobacteria</taxon>
        <taxon>Neisseriales</taxon>
        <taxon>Neisseriaceae</taxon>
        <taxon>Neisseria</taxon>
    </lineage>
</organism>
<reference key="1">
    <citation type="submission" date="1997-06" db="EMBL/GenBank/DDBJ databases">
        <authorList>
            <person name="McGee D.J."/>
            <person name="Srivastava R."/>
            <person name="Rest R.F."/>
        </authorList>
    </citation>
    <scope>NUCLEOTIDE SEQUENCE [GENOMIC DNA]</scope>
    <source>
        <strain>ATCC 33084 / F62 / M-1914</strain>
    </source>
</reference>
<evidence type="ECO:0000255" key="1">
    <source>
        <dbReference type="PROSITE-ProRule" id="PRU00464"/>
    </source>
</evidence>